<accession>A4QL94</accession>
<sequence length="249" mass="27350">MNVLSCSINTLIKEGLYEISGVEVGQHFYWQIGGFQVHAQVLITSWVVIAILLGSAVLAIRNPQTIPTDGQNFFEFVLEFIRDVSQTQIGEEYGPWVPFIGTLFLFIFVSNWSGALLPWKIIQLPQGELAAPTNDINTTVALALLTSVAYFYAGLSKKGLGYFSKYIQPTPILLPINILEDFTKPLSLSFRLFGNILADELVVVVLVSLVPLVVPIPVMFLGLFTSGIQALIFATLAAAYIGESMEGHH</sequence>
<geneLocation type="chloroplast"/>
<comment type="function">
    <text evidence="1">Key component of the proton channel; it plays a direct role in the translocation of protons across the membrane.</text>
</comment>
<comment type="subunit">
    <text evidence="1">F-type ATPases have 2 components, CF(1) - the catalytic core - and CF(0) - the membrane proton channel. CF(1) has five subunits: alpha(3), beta(3), gamma(1), delta(1), epsilon(1). CF(0) has four main subunits: a, b, b' and c.</text>
</comment>
<comment type="subcellular location">
    <subcellularLocation>
        <location evidence="1">Plastid</location>
        <location evidence="1">Chloroplast thylakoid membrane</location>
        <topology evidence="1">Multi-pass membrane protein</topology>
    </subcellularLocation>
</comment>
<comment type="similarity">
    <text evidence="1">Belongs to the ATPase A chain family.</text>
</comment>
<feature type="chain" id="PRO_0000362567" description="ATP synthase subunit a, chloroplastic">
    <location>
        <begin position="1"/>
        <end position="249"/>
    </location>
</feature>
<feature type="transmembrane region" description="Helical" evidence="1">
    <location>
        <begin position="40"/>
        <end position="60"/>
    </location>
</feature>
<feature type="transmembrane region" description="Helical" evidence="1">
    <location>
        <begin position="97"/>
        <end position="117"/>
    </location>
</feature>
<feature type="transmembrane region" description="Helical" evidence="1">
    <location>
        <begin position="136"/>
        <end position="156"/>
    </location>
</feature>
<feature type="transmembrane region" description="Helical" evidence="1">
    <location>
        <begin position="201"/>
        <end position="221"/>
    </location>
</feature>
<feature type="transmembrane region" description="Helical" evidence="1">
    <location>
        <begin position="222"/>
        <end position="242"/>
    </location>
</feature>
<evidence type="ECO:0000255" key="1">
    <source>
        <dbReference type="HAMAP-Rule" id="MF_01393"/>
    </source>
</evidence>
<dbReference type="EMBL" id="AP009374">
    <property type="protein sequence ID" value="BAF50449.1"/>
    <property type="molecule type" value="Genomic_DNA"/>
</dbReference>
<dbReference type="RefSeq" id="YP_001123625.1">
    <property type="nucleotide sequence ID" value="NC_009273.1"/>
</dbReference>
<dbReference type="SMR" id="A4QL94"/>
<dbReference type="GeneID" id="4962059"/>
<dbReference type="GO" id="GO:0009535">
    <property type="term" value="C:chloroplast thylakoid membrane"/>
    <property type="evidence" value="ECO:0007669"/>
    <property type="project" value="UniProtKB-SubCell"/>
</dbReference>
<dbReference type="GO" id="GO:0005886">
    <property type="term" value="C:plasma membrane"/>
    <property type="evidence" value="ECO:0007669"/>
    <property type="project" value="UniProtKB-UniRule"/>
</dbReference>
<dbReference type="GO" id="GO:0045259">
    <property type="term" value="C:proton-transporting ATP synthase complex"/>
    <property type="evidence" value="ECO:0007669"/>
    <property type="project" value="UniProtKB-KW"/>
</dbReference>
<dbReference type="GO" id="GO:0046933">
    <property type="term" value="F:proton-transporting ATP synthase activity, rotational mechanism"/>
    <property type="evidence" value="ECO:0007669"/>
    <property type="project" value="UniProtKB-UniRule"/>
</dbReference>
<dbReference type="CDD" id="cd00310">
    <property type="entry name" value="ATP-synt_Fo_a_6"/>
    <property type="match status" value="1"/>
</dbReference>
<dbReference type="FunFam" id="1.20.120.220:FF:000001">
    <property type="entry name" value="ATP synthase subunit a, chloroplastic"/>
    <property type="match status" value="1"/>
</dbReference>
<dbReference type="Gene3D" id="1.20.120.220">
    <property type="entry name" value="ATP synthase, F0 complex, subunit A"/>
    <property type="match status" value="1"/>
</dbReference>
<dbReference type="HAMAP" id="MF_01393">
    <property type="entry name" value="ATP_synth_a_bact"/>
    <property type="match status" value="1"/>
</dbReference>
<dbReference type="InterPro" id="IPR045082">
    <property type="entry name" value="ATP_syn_F0_a_bact/chloroplast"/>
</dbReference>
<dbReference type="InterPro" id="IPR000568">
    <property type="entry name" value="ATP_synth_F0_asu"/>
</dbReference>
<dbReference type="InterPro" id="IPR023011">
    <property type="entry name" value="ATP_synth_F0_asu_AS"/>
</dbReference>
<dbReference type="InterPro" id="IPR035908">
    <property type="entry name" value="F0_ATP_A_sf"/>
</dbReference>
<dbReference type="NCBIfam" id="TIGR01131">
    <property type="entry name" value="ATP_synt_6_or_A"/>
    <property type="match status" value="1"/>
</dbReference>
<dbReference type="PANTHER" id="PTHR42823">
    <property type="entry name" value="ATP SYNTHASE SUBUNIT A, CHLOROPLASTIC"/>
    <property type="match status" value="1"/>
</dbReference>
<dbReference type="PANTHER" id="PTHR42823:SF3">
    <property type="entry name" value="ATP SYNTHASE SUBUNIT A, CHLOROPLASTIC"/>
    <property type="match status" value="1"/>
</dbReference>
<dbReference type="Pfam" id="PF00119">
    <property type="entry name" value="ATP-synt_A"/>
    <property type="match status" value="1"/>
</dbReference>
<dbReference type="PRINTS" id="PR00123">
    <property type="entry name" value="ATPASEA"/>
</dbReference>
<dbReference type="SUPFAM" id="SSF81336">
    <property type="entry name" value="F1F0 ATP synthase subunit A"/>
    <property type="match status" value="1"/>
</dbReference>
<dbReference type="PROSITE" id="PS00449">
    <property type="entry name" value="ATPASE_A"/>
    <property type="match status" value="1"/>
</dbReference>
<reference key="1">
    <citation type="submission" date="2007-03" db="EMBL/GenBank/DDBJ databases">
        <title>Sequencing analysis of Lepidium virginicum JO26 chloroplast DNA.</title>
        <authorList>
            <person name="Hosouchi T."/>
            <person name="Tsuruoka H."/>
            <person name="Kotani H."/>
        </authorList>
    </citation>
    <scope>NUCLEOTIDE SEQUENCE [LARGE SCALE GENOMIC DNA]</scope>
</reference>
<proteinExistence type="inferred from homology"/>
<keyword id="KW-0066">ATP synthesis</keyword>
<keyword id="KW-0138">CF(0)</keyword>
<keyword id="KW-0150">Chloroplast</keyword>
<keyword id="KW-0375">Hydrogen ion transport</keyword>
<keyword id="KW-0406">Ion transport</keyword>
<keyword id="KW-0472">Membrane</keyword>
<keyword id="KW-0934">Plastid</keyword>
<keyword id="KW-0793">Thylakoid</keyword>
<keyword id="KW-0812">Transmembrane</keyword>
<keyword id="KW-1133">Transmembrane helix</keyword>
<keyword id="KW-0813">Transport</keyword>
<protein>
    <recommendedName>
        <fullName evidence="1">ATP synthase subunit a, chloroplastic</fullName>
    </recommendedName>
    <alternativeName>
        <fullName evidence="1">ATP synthase F0 sector subunit a</fullName>
    </alternativeName>
    <alternativeName>
        <fullName evidence="1">F-ATPase subunit IV</fullName>
    </alternativeName>
</protein>
<name>ATPI_LEPVR</name>
<organism>
    <name type="scientific">Lepidium virginicum</name>
    <name type="common">Virginia pepperweed</name>
    <dbReference type="NCBI Taxonomy" id="59292"/>
    <lineage>
        <taxon>Eukaryota</taxon>
        <taxon>Viridiplantae</taxon>
        <taxon>Streptophyta</taxon>
        <taxon>Embryophyta</taxon>
        <taxon>Tracheophyta</taxon>
        <taxon>Spermatophyta</taxon>
        <taxon>Magnoliopsida</taxon>
        <taxon>eudicotyledons</taxon>
        <taxon>Gunneridae</taxon>
        <taxon>Pentapetalae</taxon>
        <taxon>rosids</taxon>
        <taxon>malvids</taxon>
        <taxon>Brassicales</taxon>
        <taxon>Brassicaceae</taxon>
        <taxon>Lepidieae</taxon>
        <taxon>Lepidium</taxon>
    </lineage>
</organism>
<gene>
    <name evidence="1" type="primary">atpI</name>
</gene>